<keyword id="KW-0903">Direct protein sequencing</keyword>
<keyword id="KW-1015">Disulfide bond</keyword>
<keyword id="KW-0325">Glycoprotein</keyword>
<keyword id="KW-0646">Protease inhibitor</keyword>
<keyword id="KW-0677">Repeat</keyword>
<keyword id="KW-0964">Secreted</keyword>
<keyword id="KW-0722">Serine protease inhibitor</keyword>
<reference key="1">
    <citation type="journal article" date="1987" name="Biochemistry">
        <title>Ovomucoid third domains from 100 avian species: isolation, sequences, and hypervariability of enzyme-inhibitor contact residues.</title>
        <authorList>
            <person name="Laskowski M. Jr."/>
            <person name="Kato I."/>
            <person name="Ardelt W."/>
            <person name="Cook J."/>
            <person name="Denton A."/>
            <person name="Empie M.W."/>
            <person name="Kohr W.J."/>
            <person name="Park S.J."/>
            <person name="Parks K."/>
            <person name="Schatzley B.L."/>
            <person name="Schoenberger O.L."/>
            <person name="Tashiro M."/>
            <person name="Vichot G."/>
            <person name="Whatley H.E."/>
            <person name="Wieczorek A."/>
            <person name="Wieczorek M."/>
        </authorList>
    </citation>
    <scope>PROTEIN SEQUENCE</scope>
</reference>
<comment type="subcellular location">
    <subcellularLocation>
        <location>Secreted</location>
    </subcellularLocation>
</comment>
<comment type="domain">
    <text>Avian ovomucoid consists of three homologous, tandem Kazal family inhibitory domains.</text>
</comment>
<dbReference type="PIR" id="H31443">
    <property type="entry name" value="H31443"/>
</dbReference>
<dbReference type="SMR" id="P68130"/>
<dbReference type="GO" id="GO:0005576">
    <property type="term" value="C:extracellular region"/>
    <property type="evidence" value="ECO:0007669"/>
    <property type="project" value="UniProtKB-SubCell"/>
</dbReference>
<dbReference type="GO" id="GO:0004867">
    <property type="term" value="F:serine-type endopeptidase inhibitor activity"/>
    <property type="evidence" value="ECO:0007669"/>
    <property type="project" value="UniProtKB-KW"/>
</dbReference>
<dbReference type="CDD" id="cd00104">
    <property type="entry name" value="KAZAL_FS"/>
    <property type="match status" value="1"/>
</dbReference>
<dbReference type="FunFam" id="3.30.60.30:FF:000037">
    <property type="entry name" value="Ovomucoid"/>
    <property type="match status" value="1"/>
</dbReference>
<dbReference type="Gene3D" id="3.30.60.30">
    <property type="match status" value="1"/>
</dbReference>
<dbReference type="InterPro" id="IPR051597">
    <property type="entry name" value="Bifunctional_prot_inhibitor"/>
</dbReference>
<dbReference type="InterPro" id="IPR002350">
    <property type="entry name" value="Kazal_dom"/>
</dbReference>
<dbReference type="InterPro" id="IPR036058">
    <property type="entry name" value="Kazal_dom_sf"/>
</dbReference>
<dbReference type="InterPro" id="IPR001239">
    <property type="entry name" value="Prot_inh_Kazal-m"/>
</dbReference>
<dbReference type="PANTHER" id="PTHR47729:SF1">
    <property type="entry name" value="OVOMUCOID-LIKE-RELATED"/>
    <property type="match status" value="1"/>
</dbReference>
<dbReference type="PANTHER" id="PTHR47729">
    <property type="entry name" value="SERINE PEPTIDASE INHIBITOR, KAZAL TYPE 2, TANDEM DUPLICATE 1-RELATED"/>
    <property type="match status" value="1"/>
</dbReference>
<dbReference type="Pfam" id="PF00050">
    <property type="entry name" value="Kazal_1"/>
    <property type="match status" value="1"/>
</dbReference>
<dbReference type="PRINTS" id="PR00290">
    <property type="entry name" value="KAZALINHBTR"/>
</dbReference>
<dbReference type="SMART" id="SM00280">
    <property type="entry name" value="KAZAL"/>
    <property type="match status" value="1"/>
</dbReference>
<dbReference type="SUPFAM" id="SSF100895">
    <property type="entry name" value="Kazal-type serine protease inhibitors"/>
    <property type="match status" value="1"/>
</dbReference>
<dbReference type="PROSITE" id="PS00282">
    <property type="entry name" value="KAZAL_1"/>
    <property type="match status" value="1"/>
</dbReference>
<dbReference type="PROSITE" id="PS51465">
    <property type="entry name" value="KAZAL_2"/>
    <property type="match status" value="1"/>
</dbReference>
<organism>
    <name type="scientific">Cygnus olor</name>
    <name type="common">Mute swan</name>
    <name type="synonym">Anas olor</name>
    <dbReference type="NCBI Taxonomy" id="8869"/>
    <lineage>
        <taxon>Eukaryota</taxon>
        <taxon>Metazoa</taxon>
        <taxon>Chordata</taxon>
        <taxon>Craniata</taxon>
        <taxon>Vertebrata</taxon>
        <taxon>Euteleostomi</taxon>
        <taxon>Archelosauria</taxon>
        <taxon>Archosauria</taxon>
        <taxon>Dinosauria</taxon>
        <taxon>Saurischia</taxon>
        <taxon>Theropoda</taxon>
        <taxon>Coelurosauria</taxon>
        <taxon>Aves</taxon>
        <taxon>Neognathae</taxon>
        <taxon>Galloanserae</taxon>
        <taxon>Anseriformes</taxon>
        <taxon>Anatidae</taxon>
        <taxon>Anserinae</taxon>
        <taxon>Cygnus</taxon>
    </lineage>
</organism>
<protein>
    <recommendedName>
        <fullName>Ovomucoid</fullName>
    </recommendedName>
</protein>
<accession>P68130</accession>
<accession>P05572</accession>
<proteinExistence type="evidence at protein level"/>
<sequence>VATVDCSDYPKPACTMEYMPLCGSDNKTYGNKCNFCNAVVDSNGTLTLSHFGKC</sequence>
<evidence type="ECO:0000255" key="1">
    <source>
        <dbReference type="PROSITE-ProRule" id="PRU00798"/>
    </source>
</evidence>
<name>IOVO_CYGOL</name>
<feature type="chain" id="PRO_0000073097" description="Ovomucoid">
    <location>
        <begin position="1" status="less than"/>
        <end position="54" status="greater than"/>
    </location>
</feature>
<feature type="domain" description="Kazal-like" evidence="1">
    <location>
        <begin position="4"/>
        <end position="54"/>
    </location>
</feature>
<feature type="site" description="Reactive bond 3">
    <location>
        <begin position="16"/>
        <end position="17"/>
    </location>
</feature>
<feature type="glycosylation site" description="N-linked (GlcNAc...) asparagine">
    <location>
        <position position="43"/>
    </location>
</feature>
<feature type="disulfide bond">
    <location>
        <begin position="6"/>
        <end position="36"/>
    </location>
</feature>
<feature type="disulfide bond">
    <location>
        <begin position="14"/>
        <end position="33"/>
    </location>
</feature>
<feature type="disulfide bond">
    <location>
        <begin position="22"/>
        <end position="54"/>
    </location>
</feature>
<feature type="non-terminal residue">
    <location>
        <position position="1"/>
    </location>
</feature>
<feature type="non-terminal residue">
    <location>
        <position position="54"/>
    </location>
</feature>